<name>IF2_MYCSK</name>
<protein>
    <recommendedName>
        <fullName evidence="2">Translation initiation factor IF-2</fullName>
    </recommendedName>
</protein>
<dbReference type="EMBL" id="CP000518">
    <property type="protein sequence ID" value="ABL91326.1"/>
    <property type="molecule type" value="Genomic_DNA"/>
</dbReference>
<dbReference type="SMR" id="A1UER8"/>
<dbReference type="STRING" id="189918.Mkms_2128"/>
<dbReference type="KEGG" id="mkm:Mkms_2128"/>
<dbReference type="HOGENOM" id="CLU_006301_9_2_11"/>
<dbReference type="OrthoDB" id="9811804at2"/>
<dbReference type="GO" id="GO:0005829">
    <property type="term" value="C:cytosol"/>
    <property type="evidence" value="ECO:0007669"/>
    <property type="project" value="TreeGrafter"/>
</dbReference>
<dbReference type="GO" id="GO:0005525">
    <property type="term" value="F:GTP binding"/>
    <property type="evidence" value="ECO:0007669"/>
    <property type="project" value="UniProtKB-KW"/>
</dbReference>
<dbReference type="GO" id="GO:0003924">
    <property type="term" value="F:GTPase activity"/>
    <property type="evidence" value="ECO:0007669"/>
    <property type="project" value="UniProtKB-UniRule"/>
</dbReference>
<dbReference type="GO" id="GO:0003743">
    <property type="term" value="F:translation initiation factor activity"/>
    <property type="evidence" value="ECO:0007669"/>
    <property type="project" value="UniProtKB-UniRule"/>
</dbReference>
<dbReference type="CDD" id="cd01887">
    <property type="entry name" value="IF2_eIF5B"/>
    <property type="match status" value="1"/>
</dbReference>
<dbReference type="CDD" id="cd03702">
    <property type="entry name" value="IF2_mtIF2_II"/>
    <property type="match status" value="1"/>
</dbReference>
<dbReference type="CDD" id="cd03692">
    <property type="entry name" value="mtIF2_IVc"/>
    <property type="match status" value="1"/>
</dbReference>
<dbReference type="FunFam" id="1.10.10.2480:FF:000003">
    <property type="entry name" value="Translation initiation factor IF-2"/>
    <property type="match status" value="1"/>
</dbReference>
<dbReference type="FunFam" id="2.40.30.10:FF:000007">
    <property type="entry name" value="Translation initiation factor IF-2"/>
    <property type="match status" value="1"/>
</dbReference>
<dbReference type="FunFam" id="2.40.30.10:FF:000008">
    <property type="entry name" value="Translation initiation factor IF-2"/>
    <property type="match status" value="1"/>
</dbReference>
<dbReference type="FunFam" id="3.40.50.10050:FF:000001">
    <property type="entry name" value="Translation initiation factor IF-2"/>
    <property type="match status" value="1"/>
</dbReference>
<dbReference type="FunFam" id="3.40.50.300:FF:000019">
    <property type="entry name" value="Translation initiation factor IF-2"/>
    <property type="match status" value="1"/>
</dbReference>
<dbReference type="Gene3D" id="1.10.10.2480">
    <property type="match status" value="1"/>
</dbReference>
<dbReference type="Gene3D" id="3.40.50.300">
    <property type="entry name" value="P-loop containing nucleotide triphosphate hydrolases"/>
    <property type="match status" value="1"/>
</dbReference>
<dbReference type="Gene3D" id="2.40.30.10">
    <property type="entry name" value="Translation factors"/>
    <property type="match status" value="2"/>
</dbReference>
<dbReference type="Gene3D" id="3.40.50.10050">
    <property type="entry name" value="Translation initiation factor IF- 2, domain 3"/>
    <property type="match status" value="1"/>
</dbReference>
<dbReference type="HAMAP" id="MF_00100_B">
    <property type="entry name" value="IF_2_B"/>
    <property type="match status" value="1"/>
</dbReference>
<dbReference type="InterPro" id="IPR053905">
    <property type="entry name" value="EF-G-like_DII"/>
</dbReference>
<dbReference type="InterPro" id="IPR044145">
    <property type="entry name" value="IF2_II"/>
</dbReference>
<dbReference type="InterPro" id="IPR006847">
    <property type="entry name" value="IF2_N"/>
</dbReference>
<dbReference type="InterPro" id="IPR027417">
    <property type="entry name" value="P-loop_NTPase"/>
</dbReference>
<dbReference type="InterPro" id="IPR005225">
    <property type="entry name" value="Small_GTP-bd"/>
</dbReference>
<dbReference type="InterPro" id="IPR000795">
    <property type="entry name" value="T_Tr_GTP-bd_dom"/>
</dbReference>
<dbReference type="InterPro" id="IPR000178">
    <property type="entry name" value="TF_IF2_bacterial-like"/>
</dbReference>
<dbReference type="InterPro" id="IPR015760">
    <property type="entry name" value="TIF_IF2"/>
</dbReference>
<dbReference type="InterPro" id="IPR023115">
    <property type="entry name" value="TIF_IF2_dom3"/>
</dbReference>
<dbReference type="InterPro" id="IPR036925">
    <property type="entry name" value="TIF_IF2_dom3_sf"/>
</dbReference>
<dbReference type="InterPro" id="IPR009000">
    <property type="entry name" value="Transl_B-barrel_sf"/>
</dbReference>
<dbReference type="NCBIfam" id="TIGR00487">
    <property type="entry name" value="IF-2"/>
    <property type="match status" value="1"/>
</dbReference>
<dbReference type="NCBIfam" id="TIGR00231">
    <property type="entry name" value="small_GTP"/>
    <property type="match status" value="1"/>
</dbReference>
<dbReference type="PANTHER" id="PTHR43381:SF5">
    <property type="entry name" value="TR-TYPE G DOMAIN-CONTAINING PROTEIN"/>
    <property type="match status" value="1"/>
</dbReference>
<dbReference type="PANTHER" id="PTHR43381">
    <property type="entry name" value="TRANSLATION INITIATION FACTOR IF-2-RELATED"/>
    <property type="match status" value="1"/>
</dbReference>
<dbReference type="Pfam" id="PF22042">
    <property type="entry name" value="EF-G_D2"/>
    <property type="match status" value="1"/>
</dbReference>
<dbReference type="Pfam" id="PF00009">
    <property type="entry name" value="GTP_EFTU"/>
    <property type="match status" value="1"/>
</dbReference>
<dbReference type="Pfam" id="PF11987">
    <property type="entry name" value="IF-2"/>
    <property type="match status" value="1"/>
</dbReference>
<dbReference type="Pfam" id="PF04760">
    <property type="entry name" value="IF2_N"/>
    <property type="match status" value="2"/>
</dbReference>
<dbReference type="PRINTS" id="PR01217">
    <property type="entry name" value="PRICHEXTENSN"/>
</dbReference>
<dbReference type="SUPFAM" id="SSF52156">
    <property type="entry name" value="Initiation factor IF2/eIF5b, domain 3"/>
    <property type="match status" value="1"/>
</dbReference>
<dbReference type="SUPFAM" id="SSF52540">
    <property type="entry name" value="P-loop containing nucleoside triphosphate hydrolases"/>
    <property type="match status" value="1"/>
</dbReference>
<dbReference type="SUPFAM" id="SSF50447">
    <property type="entry name" value="Translation proteins"/>
    <property type="match status" value="2"/>
</dbReference>
<dbReference type="PROSITE" id="PS51722">
    <property type="entry name" value="G_TR_2"/>
    <property type="match status" value="1"/>
</dbReference>
<dbReference type="PROSITE" id="PS01176">
    <property type="entry name" value="IF2"/>
    <property type="match status" value="1"/>
</dbReference>
<reference key="1">
    <citation type="submission" date="2006-12" db="EMBL/GenBank/DDBJ databases">
        <title>Complete sequence of chromosome of Mycobacterium sp. KMS.</title>
        <authorList>
            <consortium name="US DOE Joint Genome Institute"/>
            <person name="Copeland A."/>
            <person name="Lucas S."/>
            <person name="Lapidus A."/>
            <person name="Barry K."/>
            <person name="Detter J.C."/>
            <person name="Glavina del Rio T."/>
            <person name="Hammon N."/>
            <person name="Israni S."/>
            <person name="Dalin E."/>
            <person name="Tice H."/>
            <person name="Pitluck S."/>
            <person name="Kiss H."/>
            <person name="Brettin T."/>
            <person name="Bruce D."/>
            <person name="Han C."/>
            <person name="Tapia R."/>
            <person name="Gilna P."/>
            <person name="Schmutz J."/>
            <person name="Larimer F."/>
            <person name="Land M."/>
            <person name="Hauser L."/>
            <person name="Kyrpides N."/>
            <person name="Mikhailova N."/>
            <person name="Miller C.D."/>
            <person name="Richardson P."/>
        </authorList>
    </citation>
    <scope>NUCLEOTIDE SEQUENCE [LARGE SCALE GENOMIC DNA]</scope>
    <source>
        <strain>KMS</strain>
    </source>
</reference>
<organism>
    <name type="scientific">Mycobacterium sp. (strain KMS)</name>
    <dbReference type="NCBI Taxonomy" id="189918"/>
    <lineage>
        <taxon>Bacteria</taxon>
        <taxon>Bacillati</taxon>
        <taxon>Actinomycetota</taxon>
        <taxon>Actinomycetes</taxon>
        <taxon>Mycobacteriales</taxon>
        <taxon>Mycobacteriaceae</taxon>
        <taxon>Mycobacterium</taxon>
    </lineage>
</organism>
<proteinExistence type="inferred from homology"/>
<comment type="function">
    <text evidence="2">One of the essential components for the initiation of protein synthesis. Protects formylmethionyl-tRNA from spontaneous hydrolysis and promotes its binding to the 30S ribosomal subunits. Also involved in the hydrolysis of GTP during the formation of the 70S ribosomal complex.</text>
</comment>
<comment type="subcellular location">
    <subcellularLocation>
        <location evidence="2">Cytoplasm</location>
    </subcellularLocation>
</comment>
<comment type="similarity">
    <text evidence="2">Belongs to the TRAFAC class translation factor GTPase superfamily. Classic translation factor GTPase family. IF-2 subfamily.</text>
</comment>
<evidence type="ECO:0000250" key="1"/>
<evidence type="ECO:0000255" key="2">
    <source>
        <dbReference type="HAMAP-Rule" id="MF_00100"/>
    </source>
</evidence>
<evidence type="ECO:0000256" key="3">
    <source>
        <dbReference type="SAM" id="MobiDB-lite"/>
    </source>
</evidence>
<accession>A1UER8</accession>
<feature type="chain" id="PRO_1000008282" description="Translation initiation factor IF-2">
    <location>
        <begin position="1"/>
        <end position="920"/>
    </location>
</feature>
<feature type="domain" description="tr-type G">
    <location>
        <begin position="416"/>
        <end position="588"/>
    </location>
</feature>
<feature type="region of interest" description="Disordered" evidence="3">
    <location>
        <begin position="33"/>
        <end position="305"/>
    </location>
</feature>
<feature type="region of interest" description="G1" evidence="1">
    <location>
        <begin position="425"/>
        <end position="432"/>
    </location>
</feature>
<feature type="region of interest" description="G2" evidence="1">
    <location>
        <begin position="450"/>
        <end position="454"/>
    </location>
</feature>
<feature type="region of interest" description="G3" evidence="1">
    <location>
        <begin position="475"/>
        <end position="478"/>
    </location>
</feature>
<feature type="region of interest" description="G4" evidence="1">
    <location>
        <begin position="529"/>
        <end position="532"/>
    </location>
</feature>
<feature type="region of interest" description="G5" evidence="1">
    <location>
        <begin position="565"/>
        <end position="567"/>
    </location>
</feature>
<feature type="compositionally biased region" description="Low complexity" evidence="3">
    <location>
        <begin position="53"/>
        <end position="86"/>
    </location>
</feature>
<feature type="compositionally biased region" description="Pro residues" evidence="3">
    <location>
        <begin position="87"/>
        <end position="159"/>
    </location>
</feature>
<feature type="compositionally biased region" description="Pro residues" evidence="3">
    <location>
        <begin position="179"/>
        <end position="193"/>
    </location>
</feature>
<feature type="compositionally biased region" description="Pro residues" evidence="3">
    <location>
        <begin position="201"/>
        <end position="212"/>
    </location>
</feature>
<feature type="compositionally biased region" description="Gly residues" evidence="3">
    <location>
        <begin position="225"/>
        <end position="291"/>
    </location>
</feature>
<feature type="compositionally biased region" description="Basic residues" evidence="3">
    <location>
        <begin position="295"/>
        <end position="304"/>
    </location>
</feature>
<feature type="binding site" evidence="2">
    <location>
        <begin position="425"/>
        <end position="432"/>
    </location>
    <ligand>
        <name>GTP</name>
        <dbReference type="ChEBI" id="CHEBI:37565"/>
    </ligand>
</feature>
<feature type="binding site" evidence="2">
    <location>
        <begin position="475"/>
        <end position="479"/>
    </location>
    <ligand>
        <name>GTP</name>
        <dbReference type="ChEBI" id="CHEBI:37565"/>
    </ligand>
</feature>
<feature type="binding site" evidence="2">
    <location>
        <begin position="529"/>
        <end position="532"/>
    </location>
    <ligand>
        <name>GTP</name>
        <dbReference type="ChEBI" id="CHEBI:37565"/>
    </ligand>
</feature>
<keyword id="KW-0963">Cytoplasm</keyword>
<keyword id="KW-0342">GTP-binding</keyword>
<keyword id="KW-0396">Initiation factor</keyword>
<keyword id="KW-0547">Nucleotide-binding</keyword>
<keyword id="KW-0648">Protein biosynthesis</keyword>
<gene>
    <name evidence="2" type="primary">infB</name>
    <name type="ordered locus">Mkms_2128</name>
</gene>
<sequence length="920" mass="95439">MAGKARVHELAKELGVTSKELLATLKEQGEFVKSASSTVEAPVARRLREKFGSKSAPAPAKSAGNGATAAPATSATPATAAAAAAPAPAPAPQAPAKPAAPKPAAPQPVAPPQPAAAAPTPPPAASAPAPAPAPSAPAPSRPGPTPGPRPGPAPKPAPRTPRVGNNPFSTQQPVDRPIPRPQPRPGAPRPGTPRPGMSPNNMPPRPAGPRPGAPAGRPGGPRPGPGGRGPGGGGGRPGGPGGGGGGNYRGGGAGGGGGAGGAAAGGFRGRPGGGGRPGQRGGAAGAFGRPGGAPKRGRKSKRAKRAEYENMQAPVVGGVRLPHGNGETIRLARGASLSDFAEKINANPASLVQALFNLGEMVTATQSVNDETLELLGSEMNYVVQVVSPEDEDRELLESFDLSYGEDAGDEGDLEIRPPVVTVMGHVDHGKTRLLDTIRQANVREGEAGGITQHIGAYQVLTELDGNERLITFIDTPGHEAFTAMRARGAKATDIAILVVAADDGVMPQTVEAINHAQAADVPVVVAVNKIDKEGADPQKIRGQLTEYGLIPEEYGGDTMFVDISAKQGTNIDALLEAVLLTADASLDLRANPDMEAQGVAIEAHLDRGRGPVATVLIQRGTLRVGDSIVAGDAYGRVRRMVDEHGEDVEAAMPSRPVQVIGFTSVPGAGDNLLVVDEDRIARQIADRRSARKRNALAARSRKRISLEDLDSALKETSQLNLILKGDNAGTVEALEEALLGIQVDDEVELRVIDRGVGGVTETNVNLASASDAIIIGFNVRAEGKATELANREGVEIRYYSVIYQAIDEIESALKGMLKPVYEEKELGRAEIRAIFRSSKVGNIAGCLVQSGIMRRNAKARLLRDNVVVAENLTVSSLRREKEDVTEVRDGYECGLTLTYSDIKEGDVIETYELVEKART</sequence>